<gene>
    <name type="primary">MT-ND5</name>
    <name type="synonym">MTND5</name>
    <name type="synonym">NADH5</name>
    <name type="synonym">ND5</name>
</gene>
<dbReference type="EC" id="7.1.1.2"/>
<dbReference type="EMBL" id="Y18134">
    <property type="protein sequence ID" value="CAA77059.1"/>
    <property type="molecule type" value="Genomic_DNA"/>
</dbReference>
<dbReference type="PIR" id="T11544">
    <property type="entry name" value="T11544"/>
</dbReference>
<dbReference type="RefSeq" id="NP_008533.1">
    <property type="nucleotide sequence ID" value="NC_002012.1"/>
</dbReference>
<dbReference type="SMR" id="Q9ZZ44"/>
<dbReference type="GeneID" id="808380"/>
<dbReference type="CTD" id="4540"/>
<dbReference type="GO" id="GO:0005743">
    <property type="term" value="C:mitochondrial inner membrane"/>
    <property type="evidence" value="ECO:0007669"/>
    <property type="project" value="UniProtKB-SubCell"/>
</dbReference>
<dbReference type="GO" id="GO:0008137">
    <property type="term" value="F:NADH dehydrogenase (ubiquinone) activity"/>
    <property type="evidence" value="ECO:0007669"/>
    <property type="project" value="UniProtKB-EC"/>
</dbReference>
<dbReference type="GO" id="GO:0042773">
    <property type="term" value="P:ATP synthesis coupled electron transport"/>
    <property type="evidence" value="ECO:0007669"/>
    <property type="project" value="InterPro"/>
</dbReference>
<dbReference type="GO" id="GO:0015990">
    <property type="term" value="P:electron transport coupled proton transport"/>
    <property type="evidence" value="ECO:0007669"/>
    <property type="project" value="TreeGrafter"/>
</dbReference>
<dbReference type="InterPro" id="IPR010934">
    <property type="entry name" value="NADH_DH_su5_C"/>
</dbReference>
<dbReference type="InterPro" id="IPR018393">
    <property type="entry name" value="NADHpl_OxRdtase_5_subgr"/>
</dbReference>
<dbReference type="InterPro" id="IPR001750">
    <property type="entry name" value="ND/Mrp_TM"/>
</dbReference>
<dbReference type="InterPro" id="IPR003945">
    <property type="entry name" value="NU5C-like"/>
</dbReference>
<dbReference type="InterPro" id="IPR001516">
    <property type="entry name" value="Proton_antipo_N"/>
</dbReference>
<dbReference type="NCBIfam" id="TIGR01974">
    <property type="entry name" value="NDH_I_L"/>
    <property type="match status" value="1"/>
</dbReference>
<dbReference type="PANTHER" id="PTHR42829">
    <property type="entry name" value="NADH-UBIQUINONE OXIDOREDUCTASE CHAIN 5"/>
    <property type="match status" value="1"/>
</dbReference>
<dbReference type="PANTHER" id="PTHR42829:SF2">
    <property type="entry name" value="NADH-UBIQUINONE OXIDOREDUCTASE CHAIN 5"/>
    <property type="match status" value="1"/>
</dbReference>
<dbReference type="Pfam" id="PF06455">
    <property type="entry name" value="NADH5_C"/>
    <property type="match status" value="1"/>
</dbReference>
<dbReference type="Pfam" id="PF00361">
    <property type="entry name" value="Proton_antipo_M"/>
    <property type="match status" value="1"/>
</dbReference>
<dbReference type="Pfam" id="PF00662">
    <property type="entry name" value="Proton_antipo_N"/>
    <property type="match status" value="1"/>
</dbReference>
<dbReference type="PRINTS" id="PR01434">
    <property type="entry name" value="NADHDHGNASE5"/>
</dbReference>
<comment type="function">
    <text evidence="1">Core subunit of the mitochondrial membrane respiratory chain NADH dehydrogenase (Complex I) that is believed to belong to the minimal assembly required for catalysis. Complex I functions in the transfer of electrons from NADH to the respiratory chain. The immediate electron acceptor for the enzyme is believed to be ubiquinone (By similarity).</text>
</comment>
<comment type="catalytic activity">
    <reaction>
        <text>a ubiquinone + NADH + 5 H(+)(in) = a ubiquinol + NAD(+) + 4 H(+)(out)</text>
        <dbReference type="Rhea" id="RHEA:29091"/>
        <dbReference type="Rhea" id="RHEA-COMP:9565"/>
        <dbReference type="Rhea" id="RHEA-COMP:9566"/>
        <dbReference type="ChEBI" id="CHEBI:15378"/>
        <dbReference type="ChEBI" id="CHEBI:16389"/>
        <dbReference type="ChEBI" id="CHEBI:17976"/>
        <dbReference type="ChEBI" id="CHEBI:57540"/>
        <dbReference type="ChEBI" id="CHEBI:57945"/>
        <dbReference type="EC" id="7.1.1.2"/>
    </reaction>
</comment>
<comment type="subcellular location">
    <subcellularLocation>
        <location evidence="1">Mitochondrion inner membrane</location>
        <topology evidence="1">Multi-pass membrane protein</topology>
    </subcellularLocation>
</comment>
<comment type="similarity">
    <text evidence="3">Belongs to the complex I subunit 5 family.</text>
</comment>
<geneLocation type="mitochondrion"/>
<feature type="chain" id="PRO_0000118151" description="NADH-ubiquinone oxidoreductase chain 5">
    <location>
        <begin position="1"/>
        <end position="610"/>
    </location>
</feature>
<feature type="transmembrane region" description="Helical" evidence="2">
    <location>
        <begin position="3"/>
        <end position="23"/>
    </location>
</feature>
<feature type="transmembrane region" description="Helical" evidence="2">
    <location>
        <begin position="90"/>
        <end position="110"/>
    </location>
</feature>
<feature type="transmembrane region" description="Helical" evidence="2">
    <location>
        <begin position="120"/>
        <end position="140"/>
    </location>
</feature>
<feature type="transmembrane region" description="Helical" evidence="2">
    <location>
        <begin position="141"/>
        <end position="161"/>
    </location>
</feature>
<feature type="transmembrane region" description="Helical" evidence="2">
    <location>
        <begin position="174"/>
        <end position="194"/>
    </location>
</feature>
<feature type="transmembrane region" description="Helical" evidence="2">
    <location>
        <begin position="213"/>
        <end position="233"/>
    </location>
</feature>
<feature type="transmembrane region" description="Helical" evidence="2">
    <location>
        <begin position="245"/>
        <end position="265"/>
    </location>
</feature>
<feature type="transmembrane region" description="Helical" evidence="2">
    <location>
        <begin position="276"/>
        <end position="296"/>
    </location>
</feature>
<feature type="transmembrane region" description="Helical" evidence="2">
    <location>
        <begin position="305"/>
        <end position="325"/>
    </location>
</feature>
<feature type="transmembrane region" description="Helical" evidence="2">
    <location>
        <begin position="328"/>
        <end position="348"/>
    </location>
</feature>
<feature type="transmembrane region" description="Helical" evidence="2">
    <location>
        <begin position="374"/>
        <end position="394"/>
    </location>
</feature>
<feature type="transmembrane region" description="Helical" evidence="2">
    <location>
        <begin position="408"/>
        <end position="428"/>
    </location>
</feature>
<feature type="transmembrane region" description="Helical" evidence="2">
    <location>
        <begin position="452"/>
        <end position="472"/>
    </location>
</feature>
<feature type="transmembrane region" description="Helical" evidence="2">
    <location>
        <begin position="492"/>
        <end position="512"/>
    </location>
</feature>
<feature type="transmembrane region" description="Helical" evidence="2">
    <location>
        <begin position="590"/>
        <end position="610"/>
    </location>
</feature>
<sequence length="610" mass="68082">MNMIIFNSAFLLIFIILLYPLISSLSPKELYPNWSSSHVKTAVKTSFFISLIPLFIYLDQGLESITTNWNWINIGPFDINMSFKFDMYSIIFTPVALYVTWSILEFALWYMHSDPNMNRFFKYLLLFLISMIILVTANNMFQLFIGWEGVGIMSFLLIGWWYSRADANTAALQAVIYNRVGDIGLILSMAWLAMNLNSWEIQQLFILSKDKDLTLPLLGLVLAAAGKSAQFGLHPWLPSAMEGPTPVSALLHSSTMVVAGIFLLIRLHPLMQDNQLILTTCLCLGALTTLFTAACALTQNDIKKIVAFSTSSQLGLMMVTIGLNQPQLAFLHICTHAFFKAMLFLCSGSIIHSLNDEQDIRKMGGLHKLLPFTSSSLTVGSLALTGMPFLSGFFSKDAIIESMNTSHLNAWALILTLIATSFTAIYSLRLIFFALMEYPRFPPLSPVNENNILVINPIKRLAYGSILAGLIITSNLPPMKTQIMTMTPLLKLSALLVTIIGLLLALELASLTNTQLKTTPTLSTHHFSNMLGYFPMVIHRLVPKTNLKWAQHISTHLIDLTWSEKIGPKSTLIQQTPLIKLSTQPQQGMIKTYLTLLFLTLTLAVLIIAI</sequence>
<evidence type="ECO:0000250" key="1"/>
<evidence type="ECO:0000255" key="2"/>
<evidence type="ECO:0000305" key="3"/>
<proteinExistence type="inferred from homology"/>
<keyword id="KW-0249">Electron transport</keyword>
<keyword id="KW-0472">Membrane</keyword>
<keyword id="KW-0496">Mitochondrion</keyword>
<keyword id="KW-0999">Mitochondrion inner membrane</keyword>
<keyword id="KW-0520">NAD</keyword>
<keyword id="KW-0679">Respiratory chain</keyword>
<keyword id="KW-1278">Translocase</keyword>
<keyword id="KW-0812">Transmembrane</keyword>
<keyword id="KW-1133">Transmembrane helix</keyword>
<keyword id="KW-0813">Transport</keyword>
<keyword id="KW-0830">Ubiquinone</keyword>
<reference key="1">
    <citation type="journal article" date="1999" name="J. Mol. Evol.">
        <title>Phylogenetic studies of complete mitochondrial DNA molecules place cartilaginous fishes within the tree of bony fishes.</title>
        <authorList>
            <person name="Rasmussen A.S."/>
            <person name="Arnason U."/>
        </authorList>
    </citation>
    <scope>NUCLEOTIDE SEQUENCE [GENOMIC DNA]</scope>
</reference>
<organism>
    <name type="scientific">Squalus acanthias</name>
    <name type="common">Spiny dogfish</name>
    <dbReference type="NCBI Taxonomy" id="7797"/>
    <lineage>
        <taxon>Eukaryota</taxon>
        <taxon>Metazoa</taxon>
        <taxon>Chordata</taxon>
        <taxon>Craniata</taxon>
        <taxon>Vertebrata</taxon>
        <taxon>Chondrichthyes</taxon>
        <taxon>Elasmobranchii</taxon>
        <taxon>Squalomorphii</taxon>
        <taxon>Squaliformes</taxon>
        <taxon>Squalidae</taxon>
        <taxon>Squalus</taxon>
    </lineage>
</organism>
<protein>
    <recommendedName>
        <fullName>NADH-ubiquinone oxidoreductase chain 5</fullName>
        <ecNumber>7.1.1.2</ecNumber>
    </recommendedName>
    <alternativeName>
        <fullName>NADH dehydrogenase subunit 5</fullName>
    </alternativeName>
</protein>
<name>NU5M_SQUAC</name>
<accession>Q9ZZ44</accession>